<evidence type="ECO:0000250" key="1"/>
<evidence type="ECO:0000255" key="2"/>
<evidence type="ECO:0000255" key="3">
    <source>
        <dbReference type="PROSITE-ProRule" id="PRU01161"/>
    </source>
</evidence>
<evidence type="ECO:0000269" key="4">
    <source>
    </source>
</evidence>
<evidence type="ECO:0000305" key="5"/>
<proteinExistence type="evidence at transcript level"/>
<comment type="function">
    <text evidence="1">Probable lipolytic acyl hydrolase (LAH), an activity which is thought to be involved in the response of tubers to pathogens.</text>
</comment>
<comment type="subcellular location">
    <subcellularLocation>
        <location evidence="1">Vacuole</location>
    </subcellularLocation>
</comment>
<comment type="tissue specificity">
    <text evidence="4">Tuber and stolon.</text>
</comment>
<comment type="developmental stage">
    <text evidence="4">Accumulates progressively during tuber formation from stolon.</text>
</comment>
<comment type="domain">
    <text>The nitrogen atoms of the two glycine residues in the GGXR motif define the oxyanion hole, and stabilize the oxyanion that forms during the nucleophilic attack by the catalytic serine during substrate cleavage.</text>
</comment>
<comment type="miscellaneous">
    <text>Patatin have a dual role as a somatic storage protein and as an enzyme involved in host resistance.</text>
</comment>
<comment type="similarity">
    <text evidence="5">Belongs to the patatin family.</text>
</comment>
<feature type="signal peptide" evidence="2">
    <location>
        <begin position="1"/>
        <end position="23"/>
    </location>
</feature>
<feature type="chain" id="PRO_0000296702" description="Patatin group A-2">
    <location>
        <begin position="24"/>
        <end position="387"/>
    </location>
</feature>
<feature type="domain" description="PNPLA" evidence="3">
    <location>
        <begin position="32"/>
        <end position="230"/>
    </location>
</feature>
<feature type="coiled-coil region" evidence="2">
    <location>
        <begin position="361"/>
        <end position="385"/>
    </location>
</feature>
<feature type="short sequence motif" description="GXGXXG" evidence="3">
    <location>
        <begin position="36"/>
        <end position="41"/>
    </location>
</feature>
<feature type="short sequence motif" description="GXSXG" evidence="3">
    <location>
        <begin position="75"/>
        <end position="79"/>
    </location>
</feature>
<feature type="short sequence motif" description="DGA/G" evidence="3">
    <location>
        <begin position="216"/>
        <end position="218"/>
    </location>
</feature>
<feature type="active site" description="Nucleophile" evidence="3">
    <location>
        <position position="77"/>
    </location>
</feature>
<feature type="active site" description="Proton acceptor" evidence="3">
    <location>
        <position position="216"/>
    </location>
</feature>
<feature type="glycosylation site" description="N-linked (GlcNAc...) asparagine" evidence="2">
    <location>
        <position position="115"/>
    </location>
</feature>
<protein>
    <recommendedName>
        <fullName>Patatin group A-2</fullName>
        <ecNumber>3.1.1.-</ecNumber>
    </recommendedName>
</protein>
<keyword id="KW-0175">Coiled coil</keyword>
<keyword id="KW-0325">Glycoprotein</keyword>
<keyword id="KW-0378">Hydrolase</keyword>
<keyword id="KW-0442">Lipid degradation</keyword>
<keyword id="KW-0443">Lipid metabolism</keyword>
<keyword id="KW-0611">Plant defense</keyword>
<keyword id="KW-1185">Reference proteome</keyword>
<keyword id="KW-0732">Signal</keyword>
<keyword id="KW-0758">Storage protein</keyword>
<keyword id="KW-0926">Vacuole</keyword>
<accession>Q2MY59</accession>
<organism>
    <name type="scientific">Solanum tuberosum</name>
    <name type="common">Potato</name>
    <dbReference type="NCBI Taxonomy" id="4113"/>
    <lineage>
        <taxon>Eukaryota</taxon>
        <taxon>Viridiplantae</taxon>
        <taxon>Streptophyta</taxon>
        <taxon>Embryophyta</taxon>
        <taxon>Tracheophyta</taxon>
        <taxon>Spermatophyta</taxon>
        <taxon>Magnoliopsida</taxon>
        <taxon>eudicotyledons</taxon>
        <taxon>Gunneridae</taxon>
        <taxon>Pentapetalae</taxon>
        <taxon>asterids</taxon>
        <taxon>lamiids</taxon>
        <taxon>Solanales</taxon>
        <taxon>Solanaceae</taxon>
        <taxon>Solanoideae</taxon>
        <taxon>Solaneae</taxon>
        <taxon>Solanum</taxon>
    </lineage>
</organism>
<dbReference type="EC" id="3.1.1.-"/>
<dbReference type="EMBL" id="DQ274479">
    <property type="protein sequence ID" value="ABC55679.1"/>
    <property type="molecule type" value="mRNA"/>
</dbReference>
<dbReference type="SMR" id="Q2MY59"/>
<dbReference type="InParanoid" id="Q2MY59"/>
<dbReference type="Proteomes" id="UP000011115">
    <property type="component" value="Unassembled WGS sequence"/>
</dbReference>
<dbReference type="ExpressionAtlas" id="Q2MY59">
    <property type="expression patterns" value="baseline and differential"/>
</dbReference>
<dbReference type="GO" id="GO:0005773">
    <property type="term" value="C:vacuole"/>
    <property type="evidence" value="ECO:0007669"/>
    <property type="project" value="UniProtKB-SubCell"/>
</dbReference>
<dbReference type="GO" id="GO:0047372">
    <property type="term" value="F:monoacylglycerol lipase activity"/>
    <property type="evidence" value="ECO:0000318"/>
    <property type="project" value="GO_Central"/>
</dbReference>
<dbReference type="GO" id="GO:0045735">
    <property type="term" value="F:nutrient reservoir activity"/>
    <property type="evidence" value="ECO:0007669"/>
    <property type="project" value="UniProtKB-KW"/>
</dbReference>
<dbReference type="GO" id="GO:0004620">
    <property type="term" value="F:phospholipase activity"/>
    <property type="evidence" value="ECO:0000318"/>
    <property type="project" value="GO_Central"/>
</dbReference>
<dbReference type="GO" id="GO:0006952">
    <property type="term" value="P:defense response"/>
    <property type="evidence" value="ECO:0007669"/>
    <property type="project" value="UniProtKB-KW"/>
</dbReference>
<dbReference type="GO" id="GO:0016042">
    <property type="term" value="P:lipid catabolic process"/>
    <property type="evidence" value="ECO:0007669"/>
    <property type="project" value="UniProtKB-KW"/>
</dbReference>
<dbReference type="Gene3D" id="3.40.1090.10">
    <property type="entry name" value="Cytosolic phospholipase A2 catalytic domain"/>
    <property type="match status" value="1"/>
</dbReference>
<dbReference type="InterPro" id="IPR016035">
    <property type="entry name" value="Acyl_Trfase/lysoPLipase"/>
</dbReference>
<dbReference type="InterPro" id="IPR002641">
    <property type="entry name" value="PNPLA_dom"/>
</dbReference>
<dbReference type="PANTHER" id="PTHR32176:SF85">
    <property type="entry name" value="PATATIN GROUP D-2"/>
    <property type="match status" value="1"/>
</dbReference>
<dbReference type="PANTHER" id="PTHR32176">
    <property type="entry name" value="XYLOSE ISOMERASE"/>
    <property type="match status" value="1"/>
</dbReference>
<dbReference type="Pfam" id="PF01734">
    <property type="entry name" value="Patatin"/>
    <property type="match status" value="1"/>
</dbReference>
<dbReference type="SUPFAM" id="SSF52151">
    <property type="entry name" value="FabD/lysophospholipase-like"/>
    <property type="match status" value="1"/>
</dbReference>
<dbReference type="PROSITE" id="PS51635">
    <property type="entry name" value="PNPLA"/>
    <property type="match status" value="1"/>
</dbReference>
<reference key="1">
    <citation type="journal article" date="2006" name="Genetics">
        <title>Structural diversity and differential transcription of the patatin multicopy gene family during potato tuber development.</title>
        <authorList>
            <person name="Stupar R.M."/>
            <person name="Beaubien K.A."/>
            <person name="Jin W."/>
            <person name="Song J."/>
            <person name="Lee M.-K."/>
            <person name="Wu C."/>
            <person name="Zhang H.-B."/>
            <person name="Han B."/>
            <person name="Jiang J."/>
        </authorList>
    </citation>
    <scope>NUCLEOTIDE SEQUENCE [MRNA]</scope>
    <scope>DEVELOPMENTAL STAGE</scope>
    <scope>TISSUE SPECIFICITY</scope>
    <source>
        <strain>cv. Kennebec</strain>
    </source>
</reference>
<sequence length="387" mass="42604">MATTKSFLILIVMILATTSSTFASLEEMVTVLSIDGGGIKGIIPGTILEFLEGQLQKMDNNADARLADYFDVIGGTSTGGLLTAMITTPNENNRPFAAANEIVPFYFEHGPHIFNSSTGQFFGPKYDGKYLMQVLQEKLGETRVHQALTEVAISSFDIKTNKPVIFTKSNLAKSPELDAKMYDICYSAAAAPTYFPPHYFATNTINGDKYEFNLVDGAVATVADPALLSVSVATRRAQEDPAFASIRSLNYKKMLLLSLGTGTTSEFDKTHTAEETAKWGALQWMLVIQQMTEAASSYMTDYYLSTVFQDLHSQNNYLRVQENALTGTTTKADDASEANMELLAQVGENLLKKPVSKDNPETYEEALKRFAKLLSDRKKLRANKASY</sequence>
<name>PATA2_SOLTU</name>